<protein>
    <recommendedName>
        <fullName evidence="1">Glycine dehydrogenase (decarboxylating)</fullName>
        <ecNumber evidence="1">1.4.4.2</ecNumber>
    </recommendedName>
    <alternativeName>
        <fullName evidence="1">Glycine cleavage system P-protein</fullName>
    </alternativeName>
    <alternativeName>
        <fullName evidence="1">Glycine decarboxylase</fullName>
    </alternativeName>
    <alternativeName>
        <fullName evidence="1">Glycine dehydrogenase (aminomethyl-transferring)</fullName>
    </alternativeName>
</protein>
<dbReference type="EC" id="1.4.4.2" evidence="1"/>
<dbReference type="EMBL" id="CP000447">
    <property type="protein sequence ID" value="ABI72985.1"/>
    <property type="molecule type" value="Genomic_DNA"/>
</dbReference>
<dbReference type="RefSeq" id="WP_011638588.1">
    <property type="nucleotide sequence ID" value="NC_008345.1"/>
</dbReference>
<dbReference type="SMR" id="Q07YC9"/>
<dbReference type="STRING" id="318167.Sfri_3149"/>
<dbReference type="KEGG" id="sfr:Sfri_3149"/>
<dbReference type="eggNOG" id="COG0403">
    <property type="taxonomic scope" value="Bacteria"/>
</dbReference>
<dbReference type="eggNOG" id="COG1003">
    <property type="taxonomic scope" value="Bacteria"/>
</dbReference>
<dbReference type="HOGENOM" id="CLU_004620_1_1_6"/>
<dbReference type="OrthoDB" id="9801272at2"/>
<dbReference type="Proteomes" id="UP000000684">
    <property type="component" value="Chromosome"/>
</dbReference>
<dbReference type="GO" id="GO:0005829">
    <property type="term" value="C:cytosol"/>
    <property type="evidence" value="ECO:0007669"/>
    <property type="project" value="TreeGrafter"/>
</dbReference>
<dbReference type="GO" id="GO:0005960">
    <property type="term" value="C:glycine cleavage complex"/>
    <property type="evidence" value="ECO:0007669"/>
    <property type="project" value="TreeGrafter"/>
</dbReference>
<dbReference type="GO" id="GO:0016594">
    <property type="term" value="F:glycine binding"/>
    <property type="evidence" value="ECO:0007669"/>
    <property type="project" value="TreeGrafter"/>
</dbReference>
<dbReference type="GO" id="GO:0004375">
    <property type="term" value="F:glycine dehydrogenase (decarboxylating) activity"/>
    <property type="evidence" value="ECO:0007669"/>
    <property type="project" value="UniProtKB-EC"/>
</dbReference>
<dbReference type="GO" id="GO:0030170">
    <property type="term" value="F:pyridoxal phosphate binding"/>
    <property type="evidence" value="ECO:0007669"/>
    <property type="project" value="TreeGrafter"/>
</dbReference>
<dbReference type="GO" id="GO:0019464">
    <property type="term" value="P:glycine decarboxylation via glycine cleavage system"/>
    <property type="evidence" value="ECO:0007669"/>
    <property type="project" value="UniProtKB-UniRule"/>
</dbReference>
<dbReference type="CDD" id="cd00613">
    <property type="entry name" value="GDC-P"/>
    <property type="match status" value="2"/>
</dbReference>
<dbReference type="FunFam" id="3.40.640.10:FF:000005">
    <property type="entry name" value="Glycine dehydrogenase (decarboxylating), mitochondrial"/>
    <property type="match status" value="1"/>
</dbReference>
<dbReference type="FunFam" id="3.90.1150.10:FF:000007">
    <property type="entry name" value="Glycine dehydrogenase (decarboxylating), mitochondrial"/>
    <property type="match status" value="1"/>
</dbReference>
<dbReference type="FunFam" id="3.40.640.10:FF:000007">
    <property type="entry name" value="glycine dehydrogenase (Decarboxylating), mitochondrial"/>
    <property type="match status" value="1"/>
</dbReference>
<dbReference type="Gene3D" id="3.90.1150.10">
    <property type="entry name" value="Aspartate Aminotransferase, domain 1"/>
    <property type="match status" value="1"/>
</dbReference>
<dbReference type="Gene3D" id="3.40.640.10">
    <property type="entry name" value="Type I PLP-dependent aspartate aminotransferase-like (Major domain)"/>
    <property type="match status" value="2"/>
</dbReference>
<dbReference type="HAMAP" id="MF_00711">
    <property type="entry name" value="GcvP"/>
    <property type="match status" value="1"/>
</dbReference>
<dbReference type="InterPro" id="IPR003437">
    <property type="entry name" value="GcvP"/>
</dbReference>
<dbReference type="InterPro" id="IPR049316">
    <property type="entry name" value="GDC-P_C"/>
</dbReference>
<dbReference type="InterPro" id="IPR049315">
    <property type="entry name" value="GDC-P_N"/>
</dbReference>
<dbReference type="InterPro" id="IPR020581">
    <property type="entry name" value="GDC_P"/>
</dbReference>
<dbReference type="InterPro" id="IPR015424">
    <property type="entry name" value="PyrdxlP-dep_Trfase"/>
</dbReference>
<dbReference type="InterPro" id="IPR015421">
    <property type="entry name" value="PyrdxlP-dep_Trfase_major"/>
</dbReference>
<dbReference type="InterPro" id="IPR015422">
    <property type="entry name" value="PyrdxlP-dep_Trfase_small"/>
</dbReference>
<dbReference type="NCBIfam" id="TIGR00461">
    <property type="entry name" value="gcvP"/>
    <property type="match status" value="1"/>
</dbReference>
<dbReference type="NCBIfam" id="NF003346">
    <property type="entry name" value="PRK04366.1"/>
    <property type="match status" value="1"/>
</dbReference>
<dbReference type="PANTHER" id="PTHR11773:SF13">
    <property type="entry name" value="GLYCINE DEHYDROGENASE (DECARBOXYLATING)"/>
    <property type="match status" value="1"/>
</dbReference>
<dbReference type="PANTHER" id="PTHR11773">
    <property type="entry name" value="GLYCINE DEHYDROGENASE, DECARBOXYLATING"/>
    <property type="match status" value="1"/>
</dbReference>
<dbReference type="Pfam" id="PF21478">
    <property type="entry name" value="GcvP2_C"/>
    <property type="match status" value="1"/>
</dbReference>
<dbReference type="Pfam" id="PF02347">
    <property type="entry name" value="GDC-P"/>
    <property type="match status" value="2"/>
</dbReference>
<dbReference type="SUPFAM" id="SSF53383">
    <property type="entry name" value="PLP-dependent transferases"/>
    <property type="match status" value="2"/>
</dbReference>
<feature type="chain" id="PRO_1000045609" description="Glycine dehydrogenase (decarboxylating)">
    <location>
        <begin position="1"/>
        <end position="962"/>
    </location>
</feature>
<feature type="modified residue" description="N6-(pyridoxal phosphate)lysine" evidence="1">
    <location>
        <position position="709"/>
    </location>
</feature>
<keyword id="KW-0560">Oxidoreductase</keyword>
<keyword id="KW-0663">Pyridoxal phosphate</keyword>
<keyword id="KW-1185">Reference proteome</keyword>
<accession>Q07YC9</accession>
<proteinExistence type="inferred from homology"/>
<organism>
    <name type="scientific">Shewanella frigidimarina (strain NCIMB 400)</name>
    <dbReference type="NCBI Taxonomy" id="318167"/>
    <lineage>
        <taxon>Bacteria</taxon>
        <taxon>Pseudomonadati</taxon>
        <taxon>Pseudomonadota</taxon>
        <taxon>Gammaproteobacteria</taxon>
        <taxon>Alteromonadales</taxon>
        <taxon>Shewanellaceae</taxon>
        <taxon>Shewanella</taxon>
    </lineage>
</organism>
<gene>
    <name evidence="1" type="primary">gcvP</name>
    <name type="ordered locus">Sfri_3149</name>
</gene>
<evidence type="ECO:0000255" key="1">
    <source>
        <dbReference type="HAMAP-Rule" id="MF_00711"/>
    </source>
</evidence>
<reference key="1">
    <citation type="submission" date="2006-08" db="EMBL/GenBank/DDBJ databases">
        <title>Complete sequence of Shewanella frigidimarina NCIMB 400.</title>
        <authorList>
            <consortium name="US DOE Joint Genome Institute"/>
            <person name="Copeland A."/>
            <person name="Lucas S."/>
            <person name="Lapidus A."/>
            <person name="Barry K."/>
            <person name="Detter J.C."/>
            <person name="Glavina del Rio T."/>
            <person name="Hammon N."/>
            <person name="Israni S."/>
            <person name="Dalin E."/>
            <person name="Tice H."/>
            <person name="Pitluck S."/>
            <person name="Fredrickson J.K."/>
            <person name="Kolker E."/>
            <person name="McCuel L.A."/>
            <person name="DiChristina T."/>
            <person name="Nealson K.H."/>
            <person name="Newman D."/>
            <person name="Tiedje J.M."/>
            <person name="Zhou J."/>
            <person name="Romine M.F."/>
            <person name="Culley D.E."/>
            <person name="Serres M."/>
            <person name="Chertkov O."/>
            <person name="Brettin T."/>
            <person name="Bruce D."/>
            <person name="Han C."/>
            <person name="Tapia R."/>
            <person name="Gilna P."/>
            <person name="Schmutz J."/>
            <person name="Larimer F."/>
            <person name="Land M."/>
            <person name="Hauser L."/>
            <person name="Kyrpides N."/>
            <person name="Mikhailova N."/>
            <person name="Richardson P."/>
        </authorList>
    </citation>
    <scope>NUCLEOTIDE SEQUENCE [LARGE SCALE GENOMIC DNA]</scope>
    <source>
        <strain>NCIMB 400</strain>
    </source>
</reference>
<sequence length="962" mass="104802">MTKQTLTQLEQHELFLTRHIGPNAEQQQEMLNFIGAESLEDLTAQTVPGKIRLPQDLTIGDSCGEAEGIAYIRNIADKNKVFKSYIGMGYYGVQVPNVILRNVFENPGWYTAYTPYQPEIAQGRLEAILNFQQVSMDLTGLDLASASLLDEATAAAEAMALAKRVSKAKKANIFFVADDVFPQTLDVVKTRAECFGFEVVVGPASEAVNYELFGALFQYTNRIGQITDYTELFATLRDNKVIVTVAADIMSLMLLKSPGAMGADVVFGSAQRFGVPMGYGGPHAAFFVARDEHKRSMPGRIIGVSKDTRGNSALRMAMQTREQHIRREKANSNICTAQILLANMASFYAVFHGPQGLKTIASRINRLADILAAGLTAKGLTLANTTWFDTISVKGADVAAINARAIAAQVNLRIDADGVFGISLDETTIRTDIADLFDVILGAGHGLDVATFDADIVANGSQSIPDALVRQDAVLTHPTFNRYQSETEMMRYIKRLENKDLALNHSMISLGSCTMKLNAAVEMLPVSWPEFANMHPFCPLDQAQGYTQLINELSEFLVKITGYDSVCIQPNSGAQGEYAGLLAIKKYHESRGDAHRNICLIPQSAHGTNPASAQLAGMKVVVTACDKQGNVDLEDLRTKAAELADSLSCIMITYPSTHGVYEESIREVCEIVHQYGGQVYLDGANMNAQVGLTSPGFIGADVSHLNLHKTFAIPHGGGGPGMGPIGVKSHLAPFVAGHTVIKPGRESDHNGAVSAAPYGSASILPISWMYIKLLGTKGVKQSTQTALLNANYIMKKLSAHYPVLFTGRNDRVAHECIIDLRPLKETSGVTEMDIAKRLNDYGFHSPTMSFPVAGTLMIEPTESESKVELDRFIEAMISIRGEITKVEAGEWPVDNNPLHNAPHTLADIMDPEFDSRPYSREVAVFPTAAVKANKFWPTVNRIDDVYGDRNLMCSCVPLSDYE</sequence>
<name>GCSP_SHEFN</name>
<comment type="function">
    <text evidence="1">The glycine cleavage system catalyzes the degradation of glycine. The P protein binds the alpha-amino group of glycine through its pyridoxal phosphate cofactor; CO(2) is released and the remaining methylamine moiety is then transferred to the lipoamide cofactor of the H protein.</text>
</comment>
<comment type="catalytic activity">
    <reaction evidence="1">
        <text>N(6)-[(R)-lipoyl]-L-lysyl-[glycine-cleavage complex H protein] + glycine + H(+) = N(6)-[(R)-S(8)-aminomethyldihydrolipoyl]-L-lysyl-[glycine-cleavage complex H protein] + CO2</text>
        <dbReference type="Rhea" id="RHEA:24304"/>
        <dbReference type="Rhea" id="RHEA-COMP:10494"/>
        <dbReference type="Rhea" id="RHEA-COMP:10495"/>
        <dbReference type="ChEBI" id="CHEBI:15378"/>
        <dbReference type="ChEBI" id="CHEBI:16526"/>
        <dbReference type="ChEBI" id="CHEBI:57305"/>
        <dbReference type="ChEBI" id="CHEBI:83099"/>
        <dbReference type="ChEBI" id="CHEBI:83143"/>
        <dbReference type="EC" id="1.4.4.2"/>
    </reaction>
</comment>
<comment type="cofactor">
    <cofactor evidence="1">
        <name>pyridoxal 5'-phosphate</name>
        <dbReference type="ChEBI" id="CHEBI:597326"/>
    </cofactor>
</comment>
<comment type="subunit">
    <text evidence="1">The glycine cleavage system is composed of four proteins: P, T, L and H.</text>
</comment>
<comment type="similarity">
    <text evidence="1">Belongs to the GcvP family.</text>
</comment>